<comment type="function">
    <text evidence="1">Binds and inhibits the conjugation of the ubiquitin-like G1P2/ISG15 protein to its target proteins. Since G1P2/ISG15 is an early antiviral protein, NS1 may inhibit the host antiviral response. Prevents EIF2AK2/PKR activation, either by binding double strand RNA or by interacting directly with EIF2AK2/PKR. Also binds poly(A) and U6 snRNA.</text>
</comment>
<comment type="subunit">
    <text evidence="1">Homodimer. Interacts with and inhibits human G1P2 conjugation by UBE1L.</text>
</comment>
<comment type="subcellular location">
    <subcellularLocation>
        <location evidence="1">Host cytoplasm</location>
    </subcellularLocation>
    <subcellularLocation>
        <location evidence="1">Host nucleus</location>
    </subcellularLocation>
</comment>
<comment type="alternative products">
    <event type="alternative splicing"/>
    <isoform>
        <id>P12601-1</id>
        <name>NS1</name>
        <sequence type="displayed"/>
    </isoform>
    <isoform>
        <id>P12601-2</id>
        <name>NEP</name>
        <name>NS2</name>
        <sequence type="not described"/>
    </isoform>
</comment>
<comment type="similarity">
    <text evidence="1">Belongs to the influenza B viruses NS1 family.</text>
</comment>
<evidence type="ECO:0000255" key="1">
    <source>
        <dbReference type="HAMAP-Rule" id="MF_04066"/>
    </source>
</evidence>
<evidence type="ECO:0007829" key="2">
    <source>
        <dbReference type="PDB" id="8TUB"/>
    </source>
</evidence>
<name>NS1_INBSJ</name>
<keyword id="KW-0002">3D-structure</keyword>
<keyword id="KW-0025">Alternative splicing</keyword>
<keyword id="KW-1035">Host cytoplasm</keyword>
<keyword id="KW-1048">Host nucleus</keyword>
<keyword id="KW-0945">Host-virus interaction</keyword>
<keyword id="KW-1090">Inhibition of host innate immune response by virus</keyword>
<keyword id="KW-1114">Inhibition of host interferon signaling pathway by virus</keyword>
<keyword id="KW-1095">Inhibition of host ISG15 by virus</keyword>
<keyword id="KW-1102">Inhibition of host PKR by virus</keyword>
<keyword id="KW-0922">Interferon antiviral system evasion</keyword>
<keyword id="KW-0694">RNA-binding</keyword>
<keyword id="KW-0899">Viral immunoevasion</keyword>
<proteinExistence type="evidence at protein level"/>
<reference key="1">
    <citation type="journal article" date="1988" name="Virology">
        <title>Influenza B virus evolution: co-circulating lineages and comparison of evolutionary pattern with those of influenza A and C viruses.</title>
        <authorList>
            <person name="Yamashita M."/>
            <person name="Krystal M."/>
            <person name="Fitch W.M."/>
            <person name="Palese P."/>
        </authorList>
    </citation>
    <scope>NUCLEOTIDE SEQUENCE [GENOMIC RNA]</scope>
</reference>
<reference key="2">
    <citation type="journal article" date="2003" name="Virology">
        <title>Intracellular warfare between human influenza viruses and human cells: the roles of the viral NS1 protein.</title>
        <authorList>
            <person name="Krug R.M."/>
            <person name="Yuan W."/>
            <person name="Noah D.L."/>
            <person name="Latham A.G."/>
        </authorList>
    </citation>
    <scope>REVIEW</scope>
</reference>
<organismHost>
    <name type="scientific">Homo sapiens</name>
    <name type="common">Human</name>
    <dbReference type="NCBI Taxonomy" id="9606"/>
</organismHost>
<gene>
    <name evidence="1" type="primary">NS</name>
</gene>
<sequence length="281" mass="31953">MADNMTTTQIEVGPGATNATINFEAGILECYERLSWQRALDYPGQDRLNRLKRKLESRIKTHNKSEPESKRMSLEERKAIGVKMMKVLLFMNPSAGIEGFEPYCMKNSSNSNCPNCNWTDYPPTPGKCLDDIEEEPENVDDPTEIVLRDMNNKDARQKIKEEVNTQKEGKFRLTIKRDIRNVLSLRVLVNGTFLKHPNGYKSLSTLHRLNAYDQSGRLVAKLVATDDLTVEDEEDGHRILNSLFERFNEGHSKPIRAAETAVGVLSQFGQEHRLSPEEGDN</sequence>
<feature type="chain" id="PRO_0000078970" description="Non-structural protein 1">
    <location>
        <begin position="1"/>
        <end position="281"/>
    </location>
</feature>
<feature type="region of interest" description="G1P2-binding">
    <location>
        <begin position="1"/>
        <end position="103"/>
    </location>
</feature>
<feature type="region of interest" description="RNA-binding and homodimerization" evidence="1">
    <location>
        <begin position="1"/>
        <end position="93"/>
    </location>
</feature>
<feature type="short sequence motif" description="Nuclear localization signal" evidence="1">
    <location>
        <begin position="50"/>
        <end position="55"/>
    </location>
</feature>
<feature type="turn" evidence="2">
    <location>
        <begin position="200"/>
        <end position="203"/>
    </location>
</feature>
<organism>
    <name type="scientific">Influenza B virus (strain B/Singapore/1964)</name>
    <dbReference type="NCBI Taxonomy" id="11545"/>
    <lineage>
        <taxon>Viruses</taxon>
        <taxon>Riboviria</taxon>
        <taxon>Orthornavirae</taxon>
        <taxon>Negarnaviricota</taxon>
        <taxon>Polyploviricotina</taxon>
        <taxon>Insthoviricetes</taxon>
        <taxon>Articulavirales</taxon>
        <taxon>Orthomyxoviridae</taxon>
        <taxon>Betainfluenzavirus</taxon>
        <taxon>Betainfluenzavirus influenzae</taxon>
        <taxon>Influenza B virus</taxon>
    </lineage>
</organism>
<protein>
    <recommendedName>
        <fullName evidence="1">Non-structural protein 1</fullName>
        <shortName evidence="1">NS1</shortName>
    </recommendedName>
    <alternativeName>
        <fullName evidence="1">NS1A</fullName>
    </alternativeName>
</protein>
<dbReference type="EMBL" id="M19795">
    <property type="protein sequence ID" value="AAA43774.1"/>
    <property type="molecule type" value="Genomic_RNA"/>
</dbReference>
<dbReference type="PDB" id="7S8S">
    <property type="method" value="X-ray"/>
    <property type="resolution" value="1.87 A"/>
    <property type="chains" value="C=186-195"/>
</dbReference>
<dbReference type="PDB" id="8TUB">
    <property type="method" value="X-ray"/>
    <property type="resolution" value="2.40 A"/>
    <property type="chains" value="D/H/K/Q=196-206"/>
</dbReference>
<dbReference type="PDBsum" id="7S8S"/>
<dbReference type="PDBsum" id="8TUB"/>
<dbReference type="SMR" id="P12601"/>
<dbReference type="GO" id="GO:0030430">
    <property type="term" value="C:host cell cytoplasm"/>
    <property type="evidence" value="ECO:0007669"/>
    <property type="project" value="UniProtKB-SubCell"/>
</dbReference>
<dbReference type="GO" id="GO:0042025">
    <property type="term" value="C:host cell nucleus"/>
    <property type="evidence" value="ECO:0007669"/>
    <property type="project" value="UniProtKB-SubCell"/>
</dbReference>
<dbReference type="GO" id="GO:0030291">
    <property type="term" value="F:protein serine/threonine kinase inhibitor activity"/>
    <property type="evidence" value="ECO:0007669"/>
    <property type="project" value="UniProtKB-KW"/>
</dbReference>
<dbReference type="GO" id="GO:0003723">
    <property type="term" value="F:RNA binding"/>
    <property type="evidence" value="ECO:0007669"/>
    <property type="project" value="UniProtKB-KW"/>
</dbReference>
<dbReference type="GO" id="GO:0039579">
    <property type="term" value="P:symbiont-mediated suppression of host ISG15-protein conjugation"/>
    <property type="evidence" value="ECO:0007669"/>
    <property type="project" value="UniProtKB-KW"/>
</dbReference>
<dbReference type="GO" id="GO:0039580">
    <property type="term" value="P:symbiont-mediated suppression of host PKR/eIFalpha signaling"/>
    <property type="evidence" value="ECO:0007669"/>
    <property type="project" value="UniProtKB-KW"/>
</dbReference>
<dbReference type="GO" id="GO:0039502">
    <property type="term" value="P:symbiont-mediated suppression of host type I interferon-mediated signaling pathway"/>
    <property type="evidence" value="ECO:0007669"/>
    <property type="project" value="UniProtKB-KW"/>
</dbReference>
<dbReference type="Gene3D" id="1.10.287.10">
    <property type="entry name" value="S15/NS1, RNA-binding"/>
    <property type="match status" value="1"/>
</dbReference>
<dbReference type="HAMAP" id="MF_04066">
    <property type="entry name" value="INFV_NS1"/>
    <property type="match status" value="1"/>
</dbReference>
<dbReference type="InterPro" id="IPR004208">
    <property type="entry name" value="NS1"/>
</dbReference>
<dbReference type="InterPro" id="IPR009068">
    <property type="entry name" value="uS15_NS1_RNA-bd_sf"/>
</dbReference>
<dbReference type="Pfam" id="PF02942">
    <property type="entry name" value="Flu_B_NS1"/>
    <property type="match status" value="1"/>
</dbReference>
<dbReference type="PIRSF" id="PIRSF003938">
    <property type="entry name" value="Flu_B_NS1"/>
    <property type="match status" value="1"/>
</dbReference>
<dbReference type="SUPFAM" id="SSF47060">
    <property type="entry name" value="S15/NS1 RNA-binding domain"/>
    <property type="match status" value="1"/>
</dbReference>
<accession>P12601</accession>